<evidence type="ECO:0000255" key="1">
    <source>
        <dbReference type="HAMAP-Rule" id="MF_00133"/>
    </source>
</evidence>
<accession>A2BZZ2</accession>
<dbReference type="EC" id="4.2.1.20" evidence="1"/>
<dbReference type="EMBL" id="CP000553">
    <property type="protein sequence ID" value="ABM74802.1"/>
    <property type="molecule type" value="Genomic_DNA"/>
</dbReference>
<dbReference type="RefSeq" id="WP_011823024.1">
    <property type="nucleotide sequence ID" value="NC_008819.1"/>
</dbReference>
<dbReference type="SMR" id="A2BZZ2"/>
<dbReference type="KEGG" id="pme:NATL1_02381"/>
<dbReference type="eggNOG" id="COG0133">
    <property type="taxonomic scope" value="Bacteria"/>
</dbReference>
<dbReference type="HOGENOM" id="CLU_016734_3_1_3"/>
<dbReference type="UniPathway" id="UPA00035">
    <property type="reaction ID" value="UER00044"/>
</dbReference>
<dbReference type="Proteomes" id="UP000002592">
    <property type="component" value="Chromosome"/>
</dbReference>
<dbReference type="GO" id="GO:0005737">
    <property type="term" value="C:cytoplasm"/>
    <property type="evidence" value="ECO:0007669"/>
    <property type="project" value="TreeGrafter"/>
</dbReference>
<dbReference type="GO" id="GO:0004834">
    <property type="term" value="F:tryptophan synthase activity"/>
    <property type="evidence" value="ECO:0007669"/>
    <property type="project" value="UniProtKB-UniRule"/>
</dbReference>
<dbReference type="CDD" id="cd06446">
    <property type="entry name" value="Trp-synth_B"/>
    <property type="match status" value="1"/>
</dbReference>
<dbReference type="FunFam" id="3.40.50.1100:FF:000001">
    <property type="entry name" value="Tryptophan synthase beta chain"/>
    <property type="match status" value="1"/>
</dbReference>
<dbReference type="FunFam" id="3.40.50.1100:FF:000004">
    <property type="entry name" value="Tryptophan synthase beta chain"/>
    <property type="match status" value="1"/>
</dbReference>
<dbReference type="Gene3D" id="3.40.50.1100">
    <property type="match status" value="2"/>
</dbReference>
<dbReference type="HAMAP" id="MF_00133">
    <property type="entry name" value="Trp_synth_beta"/>
    <property type="match status" value="1"/>
</dbReference>
<dbReference type="InterPro" id="IPR006653">
    <property type="entry name" value="Trp_synth_b_CS"/>
</dbReference>
<dbReference type="InterPro" id="IPR006654">
    <property type="entry name" value="Trp_synth_beta"/>
</dbReference>
<dbReference type="InterPro" id="IPR023026">
    <property type="entry name" value="Trp_synth_beta/beta-like"/>
</dbReference>
<dbReference type="InterPro" id="IPR001926">
    <property type="entry name" value="TrpB-like_PALP"/>
</dbReference>
<dbReference type="InterPro" id="IPR036052">
    <property type="entry name" value="TrpB-like_PALP_sf"/>
</dbReference>
<dbReference type="NCBIfam" id="TIGR00263">
    <property type="entry name" value="trpB"/>
    <property type="match status" value="1"/>
</dbReference>
<dbReference type="PANTHER" id="PTHR48077:SF3">
    <property type="entry name" value="TRYPTOPHAN SYNTHASE"/>
    <property type="match status" value="1"/>
</dbReference>
<dbReference type="PANTHER" id="PTHR48077">
    <property type="entry name" value="TRYPTOPHAN SYNTHASE-RELATED"/>
    <property type="match status" value="1"/>
</dbReference>
<dbReference type="Pfam" id="PF00291">
    <property type="entry name" value="PALP"/>
    <property type="match status" value="1"/>
</dbReference>
<dbReference type="PIRSF" id="PIRSF001413">
    <property type="entry name" value="Trp_syn_beta"/>
    <property type="match status" value="1"/>
</dbReference>
<dbReference type="SUPFAM" id="SSF53686">
    <property type="entry name" value="Tryptophan synthase beta subunit-like PLP-dependent enzymes"/>
    <property type="match status" value="1"/>
</dbReference>
<dbReference type="PROSITE" id="PS00168">
    <property type="entry name" value="TRP_SYNTHASE_BETA"/>
    <property type="match status" value="1"/>
</dbReference>
<reference key="1">
    <citation type="journal article" date="2007" name="PLoS Genet.">
        <title>Patterns and implications of gene gain and loss in the evolution of Prochlorococcus.</title>
        <authorList>
            <person name="Kettler G.C."/>
            <person name="Martiny A.C."/>
            <person name="Huang K."/>
            <person name="Zucker J."/>
            <person name="Coleman M.L."/>
            <person name="Rodrigue S."/>
            <person name="Chen F."/>
            <person name="Lapidus A."/>
            <person name="Ferriera S."/>
            <person name="Johnson J."/>
            <person name="Steglich C."/>
            <person name="Church G.M."/>
            <person name="Richardson P."/>
            <person name="Chisholm S.W."/>
        </authorList>
    </citation>
    <scope>NUCLEOTIDE SEQUENCE [LARGE SCALE GENOMIC DNA]</scope>
    <source>
        <strain>NATL1A</strain>
    </source>
</reference>
<protein>
    <recommendedName>
        <fullName evidence="1">Tryptophan synthase beta chain</fullName>
        <ecNumber evidence="1">4.2.1.20</ecNumber>
    </recommendedName>
</protein>
<organism>
    <name type="scientific">Prochlorococcus marinus (strain NATL1A)</name>
    <dbReference type="NCBI Taxonomy" id="167555"/>
    <lineage>
        <taxon>Bacteria</taxon>
        <taxon>Bacillati</taxon>
        <taxon>Cyanobacteriota</taxon>
        <taxon>Cyanophyceae</taxon>
        <taxon>Synechococcales</taxon>
        <taxon>Prochlorococcaceae</taxon>
        <taxon>Prochlorococcus</taxon>
    </lineage>
</organism>
<name>TRPB_PROM1</name>
<feature type="chain" id="PRO_1000018369" description="Tryptophan synthase beta chain">
    <location>
        <begin position="1"/>
        <end position="417"/>
    </location>
</feature>
<feature type="modified residue" description="N6-(pyridoxal phosphate)lysine" evidence="1">
    <location>
        <position position="110"/>
    </location>
</feature>
<sequence length="417" mass="45216">MTGTLPTQFKDSDLSPLTRPNALGRFGKYGGQYVPETLIPALIELEQAAKEAWKDSSFNSELNHLLKTYVGRSTPLYEATRLTEHYRKNTLKGPRIWLKREDLNHTGAHKINNALGQALLAIRMGKKRIIAETGAGQHGVATATVCARFGLECIIYMGKEDMRRQALNVFRMQLLGASVRPVTSGTATLKDATSEAIRDWVTNVETTHYILGSVAGPHPYPMLVRDFHAVIGEETKQQCKQAFGRSPDVLLACVGGGSNAMGLFHSFVEDKSVRMIGVEAAGDGVETGRHAATITEGRVGVLHGAMSLLLQDKDGQVEEAHSISAGLDYPGVGPEHSYLKEIGRAEYAAVTDTEAIEALQLVSKLEGIIPALETAHAFAYLEKLCPTLNHNSEIVINCSGRGDKDVNTVAEKLGSEI</sequence>
<gene>
    <name evidence="1" type="primary">trpB</name>
    <name type="ordered locus">NATL1_02381</name>
</gene>
<comment type="function">
    <text evidence="1">The beta subunit is responsible for the synthesis of L-tryptophan from indole and L-serine.</text>
</comment>
<comment type="catalytic activity">
    <reaction evidence="1">
        <text>(1S,2R)-1-C-(indol-3-yl)glycerol 3-phosphate + L-serine = D-glyceraldehyde 3-phosphate + L-tryptophan + H2O</text>
        <dbReference type="Rhea" id="RHEA:10532"/>
        <dbReference type="ChEBI" id="CHEBI:15377"/>
        <dbReference type="ChEBI" id="CHEBI:33384"/>
        <dbReference type="ChEBI" id="CHEBI:57912"/>
        <dbReference type="ChEBI" id="CHEBI:58866"/>
        <dbReference type="ChEBI" id="CHEBI:59776"/>
        <dbReference type="EC" id="4.2.1.20"/>
    </reaction>
</comment>
<comment type="cofactor">
    <cofactor evidence="1">
        <name>pyridoxal 5'-phosphate</name>
        <dbReference type="ChEBI" id="CHEBI:597326"/>
    </cofactor>
</comment>
<comment type="pathway">
    <text evidence="1">Amino-acid biosynthesis; L-tryptophan biosynthesis; L-tryptophan from chorismate: step 5/5.</text>
</comment>
<comment type="subunit">
    <text evidence="1">Tetramer of two alpha and two beta chains.</text>
</comment>
<comment type="similarity">
    <text evidence="1">Belongs to the TrpB family.</text>
</comment>
<proteinExistence type="inferred from homology"/>
<keyword id="KW-0028">Amino-acid biosynthesis</keyword>
<keyword id="KW-0057">Aromatic amino acid biosynthesis</keyword>
<keyword id="KW-0456">Lyase</keyword>
<keyword id="KW-0663">Pyridoxal phosphate</keyword>
<keyword id="KW-0822">Tryptophan biosynthesis</keyword>